<organism>
    <name type="scientific">Influenza A virus (strain A/USA:Iowa/1943 H1N1)</name>
    <dbReference type="NCBI Taxonomy" id="425563"/>
    <lineage>
        <taxon>Viruses</taxon>
        <taxon>Riboviria</taxon>
        <taxon>Orthornavirae</taxon>
        <taxon>Negarnaviricota</taxon>
        <taxon>Polyploviricotina</taxon>
        <taxon>Insthoviricetes</taxon>
        <taxon>Articulavirales</taxon>
        <taxon>Orthomyxoviridae</taxon>
        <taxon>Alphainfluenzavirus</taxon>
        <taxon>Alphainfluenzavirus influenzae</taxon>
        <taxon>Influenza A virus</taxon>
    </lineage>
</organism>
<name>NCAP_I43A0</name>
<reference key="1">
    <citation type="submission" date="2007-03" db="EMBL/GenBank/DDBJ databases">
        <title>The NIAID influenza genome sequencing project.</title>
        <authorList>
            <person name="Ghedin E."/>
            <person name="Spiro D."/>
            <person name="Miller N."/>
            <person name="Zaborsky J."/>
            <person name="Feldblyum T."/>
            <person name="Subbu V."/>
            <person name="Shumway M."/>
            <person name="Sparenborg J."/>
            <person name="Groveman L."/>
            <person name="Halpin R."/>
            <person name="Sitz J."/>
            <person name="Koo H."/>
            <person name="Salzberg S.L."/>
            <person name="Webster R.G."/>
            <person name="Hoffmann E."/>
            <person name="Krauss S."/>
            <person name="Naeve C."/>
            <person name="Bao Y."/>
            <person name="Bolotov P."/>
            <person name="Dernovoy D."/>
            <person name="Kiryutin B."/>
            <person name="Lipman D.J."/>
            <person name="Tatusova T."/>
        </authorList>
    </citation>
    <scope>NUCLEOTIDE SEQUENCE [GENOMIC RNA]</scope>
</reference>
<reference key="2">
    <citation type="submission" date="2007-03" db="EMBL/GenBank/DDBJ databases">
        <authorList>
            <consortium name="The NIAID Influenza Genome Sequencing Consortium"/>
        </authorList>
    </citation>
    <scope>NUCLEOTIDE SEQUENCE [GENOMIC RNA]</scope>
</reference>
<sequence>MASQGTKRSYEQMETDGERQNATEIRASVGKMIGGIGRFYIQMCTELKLSDYEGRLIQNSLTIERMVLSAFDERRNKYLEEHPSAGKDPKKTGGPIYKRVDGKWMRELILYDKEEIRRIWRQANNGDDATAGLTHMMIWHSNLNDATYQRTRALVRTGMDPRMCSLMQGSTLPRRSGAAGAAVKGVGTMVMELIRMIKRGINDRNFWRGENGRKTRIAYERMCNILKGKFQTAAQRAMMDQVRESRNPGNAEFEDLTFLARSALILRGSVAHKSCLPACVYGPAVASGYDFEREGYSLVGIDPFKLLQNSQVYSLIRPNENPAHKSQLVWMACHSAAFEDLRVSSFIRGTRVVPRGKLSTRGVQIASNENMETMGSSTLELRSRYWAIRTRSGGNTNQQRASAGQISIQPTFSVQRNLPFDRTTIMAAFTGNTEGRTSDMRTEIIRMMESARPEDVSFQGRGVFELSDEKAANPIVPSFDMSNEGSYFFGDNAEEYDN</sequence>
<protein>
    <recommendedName>
        <fullName evidence="1">Nucleoprotein</fullName>
    </recommendedName>
    <alternativeName>
        <fullName evidence="1">Nucleocapsid protein</fullName>
        <shortName evidence="1">Protein N</shortName>
    </alternativeName>
</protein>
<keyword id="KW-0167">Capsid protein</keyword>
<keyword id="KW-1139">Helical capsid protein</keyword>
<keyword id="KW-1048">Host nucleus</keyword>
<keyword id="KW-0945">Host-virus interaction</keyword>
<keyword id="KW-0687">Ribonucleoprotein</keyword>
<keyword id="KW-0694">RNA-binding</keyword>
<keyword id="KW-0543">Viral nucleoprotein</keyword>
<keyword id="KW-1163">Viral penetration into host nucleus</keyword>
<keyword id="KW-0946">Virion</keyword>
<keyword id="KW-1160">Virus entry into host cell</keyword>
<dbReference type="EMBL" id="CY020464">
    <property type="protein sequence ID" value="ABO38377.1"/>
    <property type="molecule type" value="Viral_cRNA"/>
</dbReference>
<dbReference type="SMR" id="A4GCL2"/>
<dbReference type="PRO" id="PR:A4GCL2"/>
<dbReference type="Proteomes" id="UP000008432">
    <property type="component" value="Genome"/>
</dbReference>
<dbReference type="GO" id="GO:0019029">
    <property type="term" value="C:helical viral capsid"/>
    <property type="evidence" value="ECO:0007669"/>
    <property type="project" value="UniProtKB-UniRule"/>
</dbReference>
<dbReference type="GO" id="GO:0043657">
    <property type="term" value="C:host cell"/>
    <property type="evidence" value="ECO:0007669"/>
    <property type="project" value="GOC"/>
</dbReference>
<dbReference type="GO" id="GO:0042025">
    <property type="term" value="C:host cell nucleus"/>
    <property type="evidence" value="ECO:0007669"/>
    <property type="project" value="UniProtKB-SubCell"/>
</dbReference>
<dbReference type="GO" id="GO:1990904">
    <property type="term" value="C:ribonucleoprotein complex"/>
    <property type="evidence" value="ECO:0007669"/>
    <property type="project" value="UniProtKB-KW"/>
</dbReference>
<dbReference type="GO" id="GO:0019013">
    <property type="term" value="C:viral nucleocapsid"/>
    <property type="evidence" value="ECO:0007669"/>
    <property type="project" value="UniProtKB-UniRule"/>
</dbReference>
<dbReference type="GO" id="GO:0003723">
    <property type="term" value="F:RNA binding"/>
    <property type="evidence" value="ECO:0007669"/>
    <property type="project" value="UniProtKB-UniRule"/>
</dbReference>
<dbReference type="GO" id="GO:0005198">
    <property type="term" value="F:structural molecule activity"/>
    <property type="evidence" value="ECO:0007669"/>
    <property type="project" value="UniProtKB-UniRule"/>
</dbReference>
<dbReference type="GO" id="GO:0046718">
    <property type="term" value="P:symbiont entry into host cell"/>
    <property type="evidence" value="ECO:0007669"/>
    <property type="project" value="UniProtKB-KW"/>
</dbReference>
<dbReference type="GO" id="GO:0075732">
    <property type="term" value="P:viral penetration into host nucleus"/>
    <property type="evidence" value="ECO:0007669"/>
    <property type="project" value="UniProtKB-UniRule"/>
</dbReference>
<dbReference type="HAMAP" id="MF_04070">
    <property type="entry name" value="INFV_NCAP"/>
    <property type="match status" value="1"/>
</dbReference>
<dbReference type="InterPro" id="IPR002141">
    <property type="entry name" value="Flu_NP"/>
</dbReference>
<dbReference type="Pfam" id="PF00506">
    <property type="entry name" value="Flu_NP"/>
    <property type="match status" value="1"/>
</dbReference>
<dbReference type="SUPFAM" id="SSF161003">
    <property type="entry name" value="flu NP-like"/>
    <property type="match status" value="1"/>
</dbReference>
<accession>A4GCL2</accession>
<proteinExistence type="inferred from homology"/>
<gene>
    <name evidence="1" type="primary">NP</name>
</gene>
<organismHost>
    <name type="scientific">Aves</name>
    <dbReference type="NCBI Taxonomy" id="8782"/>
</organismHost>
<organismHost>
    <name type="scientific">Homo sapiens</name>
    <name type="common">Human</name>
    <dbReference type="NCBI Taxonomy" id="9606"/>
</organismHost>
<organismHost>
    <name type="scientific">Sus scrofa</name>
    <name type="common">Pig</name>
    <dbReference type="NCBI Taxonomy" id="9823"/>
</organismHost>
<feature type="chain" id="PRO_0000372936" description="Nucleoprotein">
    <location>
        <begin position="1"/>
        <end position="498"/>
    </location>
</feature>
<feature type="region of interest" description="Disordered" evidence="2">
    <location>
        <begin position="1"/>
        <end position="21"/>
    </location>
</feature>
<feature type="short sequence motif" description="Unconventional nuclear localization signal" evidence="1">
    <location>
        <begin position="1"/>
        <end position="18"/>
    </location>
</feature>
<feature type="short sequence motif" description="Bipartite nuclear localization signal" evidence="1">
    <location>
        <begin position="198"/>
        <end position="216"/>
    </location>
</feature>
<feature type="compositionally biased region" description="Basic and acidic residues" evidence="2">
    <location>
        <begin position="8"/>
        <end position="21"/>
    </location>
</feature>
<comment type="function">
    <text evidence="1">Encapsidates the negative strand viral RNA, protecting it from nucleases. The encapsidated genomic RNA is termed the ribonucleoprotein (RNP) and serves as template for transcription and replication. The RNP needs to be localized in the host nucleus to start an infectious cycle, but is too large to diffuse through the nuclear pore complex. NP comprises at least 2 nuclear localization signals that are responsible for the active RNP import into the nucleus through cellular importin alpha/beta pathway. Later in the infection, nclear export of RNPs are mediated through viral proteins NEP interacting with M1 which binds nucleoproteins. It is possible that nucleoprotein binds directly host exportin-1/XPO1 and plays an active role in RNPs nuclear export. M1 interaction with RNP seems to hide nucleoprotein's nuclear localization signals. Soon after a virion infects a new cell, M1 dissociates from the RNP under acidification of the virion driven by M2 protein. Dissociation of M1 from RNP unmasks nucleoprotein's nuclear localization signals, targeting the RNP to the nucleus.</text>
</comment>
<comment type="subunit">
    <text evidence="1">Homomultimerizes to form the nucleocapsid. May bind host exportin-1/XPO1. Binds to viral genomic RNA. Protein-RNA contacts are mediated by a combination of electrostatic interactions between positively charged residues and the phosphate backbone and planar interactions between aromatic side chains and bases.</text>
</comment>
<comment type="subcellular location">
    <subcellularLocation>
        <location evidence="1">Virion</location>
    </subcellularLocation>
    <subcellularLocation>
        <location evidence="1">Host nucleus</location>
    </subcellularLocation>
</comment>
<comment type="PTM">
    <text evidence="1">Late in virus-infected cells, may be cleaved from a 56-kDa protein to a 53-kDa protein by a cellular caspase. This cleavage might be a marker for the onset of apoptosis in infected cells or have a specific function in virus host interaction.</text>
</comment>
<comment type="similarity">
    <text evidence="1">Belongs to the influenza viruses nucleoprotein family.</text>
</comment>
<evidence type="ECO:0000255" key="1">
    <source>
        <dbReference type="HAMAP-Rule" id="MF_04070"/>
    </source>
</evidence>
<evidence type="ECO:0000256" key="2">
    <source>
        <dbReference type="SAM" id="MobiDB-lite"/>
    </source>
</evidence>